<keyword id="KW-0068">Autocatalytic cleavage</keyword>
<keyword id="KW-0210">Decarboxylase</keyword>
<keyword id="KW-0456">Lyase</keyword>
<keyword id="KW-0620">Polyamine biosynthesis</keyword>
<keyword id="KW-0670">Pyruvate</keyword>
<keyword id="KW-0949">S-adenosyl-L-methionine</keyword>
<keyword id="KW-0704">Schiff base</keyword>
<keyword id="KW-0745">Spermidine biosynthesis</keyword>
<keyword id="KW-0865">Zymogen</keyword>
<evidence type="ECO:0000255" key="1">
    <source>
        <dbReference type="HAMAP-Rule" id="MF_00464"/>
    </source>
</evidence>
<gene>
    <name evidence="1" type="primary">speH</name>
    <name type="ordered locus">PTO1286</name>
</gene>
<protein>
    <recommendedName>
        <fullName evidence="1">S-adenosylmethionine decarboxylase proenzyme</fullName>
        <shortName evidence="1">AdoMetDC</shortName>
        <shortName evidence="1">SAMDC</shortName>
        <ecNumber evidence="1">4.1.1.50</ecNumber>
    </recommendedName>
    <component>
        <recommendedName>
            <fullName evidence="1">S-adenosylmethionine decarboxylase beta chain</fullName>
        </recommendedName>
    </component>
    <component>
        <recommendedName>
            <fullName evidence="1">S-adenosylmethionine decarboxylase alpha chain</fullName>
        </recommendedName>
    </component>
</protein>
<feature type="chain" id="PRO_0000030135" description="S-adenosylmethionine decarboxylase beta chain" evidence="1">
    <location>
        <begin position="1"/>
        <end position="63"/>
    </location>
</feature>
<feature type="chain" id="PRO_0000030136" description="S-adenosylmethionine decarboxylase alpha chain" evidence="1">
    <location>
        <begin position="64"/>
        <end position="130"/>
    </location>
</feature>
<feature type="active site" description="Schiff-base intermediate with substrate; via pyruvic acid" evidence="1">
    <location>
        <position position="64"/>
    </location>
</feature>
<feature type="active site" description="Proton acceptor; for processing activity" evidence="1">
    <location>
        <position position="69"/>
    </location>
</feature>
<feature type="active site" description="Proton donor; for catalytic activity" evidence="1">
    <location>
        <position position="84"/>
    </location>
</feature>
<feature type="site" description="Cleavage (non-hydrolytic); by autolysis" evidence="1">
    <location>
        <begin position="63"/>
        <end position="64"/>
    </location>
</feature>
<feature type="modified residue" description="Pyruvic acid (Ser); by autocatalysis" evidence="1">
    <location>
        <position position="64"/>
    </location>
</feature>
<accession>Q6KZI1</accession>
<dbReference type="EC" id="4.1.1.50" evidence="1"/>
<dbReference type="EMBL" id="AE017261">
    <property type="protein sequence ID" value="AAT43871.1"/>
    <property type="molecule type" value="Genomic_DNA"/>
</dbReference>
<dbReference type="RefSeq" id="WP_011178087.1">
    <property type="nucleotide sequence ID" value="NC_005877.1"/>
</dbReference>
<dbReference type="SMR" id="Q6KZI1"/>
<dbReference type="FunCoup" id="Q6KZI1">
    <property type="interactions" value="18"/>
</dbReference>
<dbReference type="STRING" id="263820.PTO1286"/>
<dbReference type="PaxDb" id="263820-PTO1286"/>
<dbReference type="GeneID" id="2844387"/>
<dbReference type="KEGG" id="pto:PTO1286"/>
<dbReference type="PATRIC" id="fig|263820.9.peg.1335"/>
<dbReference type="eggNOG" id="arCOG00279">
    <property type="taxonomic scope" value="Archaea"/>
</dbReference>
<dbReference type="HOGENOM" id="CLU_125470_2_3_2"/>
<dbReference type="InParanoid" id="Q6KZI1"/>
<dbReference type="OrthoDB" id="114016at2157"/>
<dbReference type="UniPathway" id="UPA00331">
    <property type="reaction ID" value="UER00451"/>
</dbReference>
<dbReference type="Proteomes" id="UP000000438">
    <property type="component" value="Chromosome"/>
</dbReference>
<dbReference type="GO" id="GO:0005829">
    <property type="term" value="C:cytosol"/>
    <property type="evidence" value="ECO:0007669"/>
    <property type="project" value="TreeGrafter"/>
</dbReference>
<dbReference type="GO" id="GO:0004014">
    <property type="term" value="F:adenosylmethionine decarboxylase activity"/>
    <property type="evidence" value="ECO:0007669"/>
    <property type="project" value="UniProtKB-UniRule"/>
</dbReference>
<dbReference type="GO" id="GO:0008295">
    <property type="term" value="P:spermidine biosynthetic process"/>
    <property type="evidence" value="ECO:0007669"/>
    <property type="project" value="UniProtKB-UniRule"/>
</dbReference>
<dbReference type="Gene3D" id="3.60.90.10">
    <property type="entry name" value="S-adenosylmethionine decarboxylase"/>
    <property type="match status" value="1"/>
</dbReference>
<dbReference type="HAMAP" id="MF_00464">
    <property type="entry name" value="AdoMetDC_1"/>
    <property type="match status" value="1"/>
</dbReference>
<dbReference type="InterPro" id="IPR003826">
    <property type="entry name" value="AdoMetDC_fam_prok"/>
</dbReference>
<dbReference type="InterPro" id="IPR016067">
    <property type="entry name" value="S-AdoMet_deCO2ase_core"/>
</dbReference>
<dbReference type="InterPro" id="IPR017716">
    <property type="entry name" value="S-AdoMet_deCOase_pro-enz"/>
</dbReference>
<dbReference type="NCBIfam" id="TIGR03330">
    <property type="entry name" value="SAM_DCase_Bsu"/>
    <property type="match status" value="1"/>
</dbReference>
<dbReference type="PANTHER" id="PTHR33866">
    <property type="entry name" value="S-ADENOSYLMETHIONINE DECARBOXYLASE PROENZYME"/>
    <property type="match status" value="1"/>
</dbReference>
<dbReference type="PANTHER" id="PTHR33866:SF2">
    <property type="entry name" value="S-ADENOSYLMETHIONINE DECARBOXYLASE PROENZYME"/>
    <property type="match status" value="1"/>
</dbReference>
<dbReference type="Pfam" id="PF02675">
    <property type="entry name" value="AdoMet_dc"/>
    <property type="match status" value="1"/>
</dbReference>
<dbReference type="SUPFAM" id="SSF56276">
    <property type="entry name" value="S-adenosylmethionine decarboxylase"/>
    <property type="match status" value="1"/>
</dbReference>
<name>SPEH_PICTO</name>
<sequence length="130" mass="14599">MKVAVGVHIIADLYGVDARLISSSEAISPIMENAIQEGHLTKISSEYYQFRPMGASGIALLAESHLSFHTWPEYGLVTLDIYTCGDRSNADRAFDYIIKVLKPTSVDYRKMERGSQIKEDVRITDPQMML</sequence>
<proteinExistence type="inferred from homology"/>
<reference key="1">
    <citation type="journal article" date="2004" name="Proc. Natl. Acad. Sci. U.S.A.">
        <title>Genome sequence of Picrophilus torridus and its implications for life around pH 0.</title>
        <authorList>
            <person name="Fuetterer O."/>
            <person name="Angelov A."/>
            <person name="Liesegang H."/>
            <person name="Gottschalk G."/>
            <person name="Schleper C."/>
            <person name="Schepers B."/>
            <person name="Dock C."/>
            <person name="Antranikian G."/>
            <person name="Liebl W."/>
        </authorList>
    </citation>
    <scope>NUCLEOTIDE SEQUENCE [LARGE SCALE GENOMIC DNA]</scope>
    <source>
        <strain>ATCC 700027 / DSM 9790 / JCM 10055 / NBRC 100828 / KAW 2/3</strain>
    </source>
</reference>
<organism>
    <name type="scientific">Picrophilus torridus (strain ATCC 700027 / DSM 9790 / JCM 10055 / NBRC 100828 / KAW 2/3)</name>
    <dbReference type="NCBI Taxonomy" id="1122961"/>
    <lineage>
        <taxon>Archaea</taxon>
        <taxon>Methanobacteriati</taxon>
        <taxon>Thermoplasmatota</taxon>
        <taxon>Thermoplasmata</taxon>
        <taxon>Thermoplasmatales</taxon>
        <taxon>Picrophilaceae</taxon>
        <taxon>Picrophilus</taxon>
    </lineage>
</organism>
<comment type="function">
    <text evidence="1">Catalyzes the decarboxylation of S-adenosylmethionine to S-adenosylmethioninamine (dcAdoMet), the propylamine donor required for the synthesis of the polyamines spermine and spermidine from the diamine putrescine.</text>
</comment>
<comment type="catalytic activity">
    <reaction evidence="1">
        <text>S-adenosyl-L-methionine + H(+) = S-adenosyl 3-(methylsulfanyl)propylamine + CO2</text>
        <dbReference type="Rhea" id="RHEA:15981"/>
        <dbReference type="ChEBI" id="CHEBI:15378"/>
        <dbReference type="ChEBI" id="CHEBI:16526"/>
        <dbReference type="ChEBI" id="CHEBI:57443"/>
        <dbReference type="ChEBI" id="CHEBI:59789"/>
        <dbReference type="EC" id="4.1.1.50"/>
    </reaction>
</comment>
<comment type="cofactor">
    <cofactor evidence="1">
        <name>pyruvate</name>
        <dbReference type="ChEBI" id="CHEBI:15361"/>
    </cofactor>
    <text evidence="1">Binds 1 pyruvoyl group covalently per subunit.</text>
</comment>
<comment type="pathway">
    <text evidence="1">Amine and polyamine biosynthesis; S-adenosylmethioninamine biosynthesis; S-adenosylmethioninamine from S-adenosyl-L-methionine: step 1/1.</text>
</comment>
<comment type="subunit">
    <text evidence="1">Heterotetramer of two alpha and two beta chains arranged as a dimer of alpha/beta heterodimers.</text>
</comment>
<comment type="PTM">
    <text evidence="1">Is synthesized initially as an inactive proenzyme. Formation of the active enzyme involves a self-maturation process in which the active site pyruvoyl group is generated from an internal serine residue via an autocatalytic post-translational modification. Two non-identical subunits are generated from the proenzyme in this reaction, and the pyruvate is formed at the N-terminus of the alpha chain, which is derived from the carboxyl end of the proenzyme. The post-translation cleavage follows an unusual pathway, termed non-hydrolytic serinolysis, in which the side chain hydroxyl group of the serine supplies its oxygen atom to form the C-terminus of the beta chain, while the remainder of the serine residue undergoes an oxidative deamination to produce ammonia and the pyruvoyl group blocking the N-terminus of the alpha chain.</text>
</comment>
<comment type="similarity">
    <text evidence="1">Belongs to the prokaryotic AdoMetDC family. Type 1 subfamily.</text>
</comment>